<keyword id="KW-0963">Cytoplasm</keyword>
<keyword id="KW-0378">Hydrolase</keyword>
<keyword id="KW-0694">RNA-binding</keyword>
<keyword id="KW-0820">tRNA-binding</keyword>
<protein>
    <recommendedName>
        <fullName evidence="1">D-aminoacyl-tRNA deacylase</fullName>
        <shortName evidence="1">DTD</shortName>
        <ecNumber evidence="1">3.1.1.96</ecNumber>
    </recommendedName>
    <alternativeName>
        <fullName evidence="1">Gly-tRNA(Ala) deacylase</fullName>
    </alternativeName>
</protein>
<gene>
    <name evidence="1" type="primary">dtd</name>
    <name type="ordered locus">PPA0346</name>
</gene>
<dbReference type="EC" id="3.1.1.96" evidence="1"/>
<dbReference type="EMBL" id="AE017283">
    <property type="protein sequence ID" value="AAT82101.1"/>
    <property type="molecule type" value="Genomic_DNA"/>
</dbReference>
<dbReference type="RefSeq" id="WP_002517054.1">
    <property type="nucleotide sequence ID" value="NZ_CP025935.1"/>
</dbReference>
<dbReference type="SMR" id="Q6AAW5"/>
<dbReference type="EnsemblBacteria" id="AAT82101">
    <property type="protein sequence ID" value="AAT82101"/>
    <property type="gene ID" value="PPA0346"/>
</dbReference>
<dbReference type="GeneID" id="92856329"/>
<dbReference type="KEGG" id="pac:PPA0346"/>
<dbReference type="eggNOG" id="COG1490">
    <property type="taxonomic scope" value="Bacteria"/>
</dbReference>
<dbReference type="HOGENOM" id="CLU_076901_1_2_11"/>
<dbReference type="Proteomes" id="UP000000603">
    <property type="component" value="Chromosome"/>
</dbReference>
<dbReference type="GO" id="GO:0005737">
    <property type="term" value="C:cytoplasm"/>
    <property type="evidence" value="ECO:0007669"/>
    <property type="project" value="UniProtKB-SubCell"/>
</dbReference>
<dbReference type="GO" id="GO:0051500">
    <property type="term" value="F:D-tyrosyl-tRNA(Tyr) deacylase activity"/>
    <property type="evidence" value="ECO:0007669"/>
    <property type="project" value="TreeGrafter"/>
</dbReference>
<dbReference type="GO" id="GO:0106026">
    <property type="term" value="F:Gly-tRNA(Ala) deacylase activity"/>
    <property type="evidence" value="ECO:0007669"/>
    <property type="project" value="UniProtKB-UniRule"/>
</dbReference>
<dbReference type="GO" id="GO:0043908">
    <property type="term" value="F:Ser(Gly)-tRNA(Ala) hydrolase activity"/>
    <property type="evidence" value="ECO:0007669"/>
    <property type="project" value="UniProtKB-UniRule"/>
</dbReference>
<dbReference type="GO" id="GO:0000049">
    <property type="term" value="F:tRNA binding"/>
    <property type="evidence" value="ECO:0007669"/>
    <property type="project" value="UniProtKB-UniRule"/>
</dbReference>
<dbReference type="GO" id="GO:0019478">
    <property type="term" value="P:D-amino acid catabolic process"/>
    <property type="evidence" value="ECO:0007669"/>
    <property type="project" value="UniProtKB-UniRule"/>
</dbReference>
<dbReference type="FunFam" id="3.50.80.10:FF:000001">
    <property type="entry name" value="D-aminoacyl-tRNA deacylase"/>
    <property type="match status" value="1"/>
</dbReference>
<dbReference type="Gene3D" id="3.50.80.10">
    <property type="entry name" value="D-tyrosyl-tRNA(Tyr) deacylase"/>
    <property type="match status" value="1"/>
</dbReference>
<dbReference type="HAMAP" id="MF_00518">
    <property type="entry name" value="Deacylase_Dtd"/>
    <property type="match status" value="1"/>
</dbReference>
<dbReference type="InterPro" id="IPR003732">
    <property type="entry name" value="Daa-tRNA_deacyls_DTD"/>
</dbReference>
<dbReference type="InterPro" id="IPR023509">
    <property type="entry name" value="DTD-like_sf"/>
</dbReference>
<dbReference type="NCBIfam" id="TIGR00256">
    <property type="entry name" value="D-aminoacyl-tRNA deacylase"/>
    <property type="match status" value="1"/>
</dbReference>
<dbReference type="PANTHER" id="PTHR10472:SF5">
    <property type="entry name" value="D-AMINOACYL-TRNA DEACYLASE 1"/>
    <property type="match status" value="1"/>
</dbReference>
<dbReference type="PANTHER" id="PTHR10472">
    <property type="entry name" value="D-TYROSYL-TRNA TYR DEACYLASE"/>
    <property type="match status" value="1"/>
</dbReference>
<dbReference type="Pfam" id="PF02580">
    <property type="entry name" value="Tyr_Deacylase"/>
    <property type="match status" value="1"/>
</dbReference>
<dbReference type="SUPFAM" id="SSF69500">
    <property type="entry name" value="DTD-like"/>
    <property type="match status" value="1"/>
</dbReference>
<name>DTD_CUTAK</name>
<accession>Q6AAW5</accession>
<evidence type="ECO:0000255" key="1">
    <source>
        <dbReference type="HAMAP-Rule" id="MF_00518"/>
    </source>
</evidence>
<feature type="chain" id="PRO_0000164573" description="D-aminoacyl-tRNA deacylase">
    <location>
        <begin position="1"/>
        <end position="145"/>
    </location>
</feature>
<feature type="short sequence motif" description="Gly-cisPro motif, important for rejection of L-amino acids" evidence="1">
    <location>
        <begin position="133"/>
        <end position="134"/>
    </location>
</feature>
<reference key="1">
    <citation type="journal article" date="2004" name="Science">
        <title>The complete genome sequence of Propionibacterium acnes, a commensal of human skin.</title>
        <authorList>
            <person name="Brueggemann H."/>
            <person name="Henne A."/>
            <person name="Hoster F."/>
            <person name="Liesegang H."/>
            <person name="Wiezer A."/>
            <person name="Strittmatter A."/>
            <person name="Hujer S."/>
            <person name="Duerre P."/>
            <person name="Gottschalk G."/>
        </authorList>
    </citation>
    <scope>NUCLEOTIDE SEQUENCE [LARGE SCALE GENOMIC DNA]</scope>
    <source>
        <strain>DSM 16379 / KPA171202</strain>
    </source>
</reference>
<comment type="function">
    <text evidence="1">An aminoacyl-tRNA editing enzyme that deacylates mischarged D-aminoacyl-tRNAs. Also deacylates mischarged glycyl-tRNA(Ala), protecting cells against glycine mischarging by AlaRS. Acts via tRNA-based rather than protein-based catalysis; rejects L-amino acids rather than detecting D-amino acids in the active site. By recycling D-aminoacyl-tRNA to D-amino acids and free tRNA molecules, this enzyme counteracts the toxicity associated with the formation of D-aminoacyl-tRNA entities in vivo and helps enforce protein L-homochirality.</text>
</comment>
<comment type="catalytic activity">
    <reaction evidence="1">
        <text>glycyl-tRNA(Ala) + H2O = tRNA(Ala) + glycine + H(+)</text>
        <dbReference type="Rhea" id="RHEA:53744"/>
        <dbReference type="Rhea" id="RHEA-COMP:9657"/>
        <dbReference type="Rhea" id="RHEA-COMP:13640"/>
        <dbReference type="ChEBI" id="CHEBI:15377"/>
        <dbReference type="ChEBI" id="CHEBI:15378"/>
        <dbReference type="ChEBI" id="CHEBI:57305"/>
        <dbReference type="ChEBI" id="CHEBI:78442"/>
        <dbReference type="ChEBI" id="CHEBI:78522"/>
        <dbReference type="EC" id="3.1.1.96"/>
    </reaction>
</comment>
<comment type="catalytic activity">
    <reaction evidence="1">
        <text>a D-aminoacyl-tRNA + H2O = a tRNA + a D-alpha-amino acid + H(+)</text>
        <dbReference type="Rhea" id="RHEA:13953"/>
        <dbReference type="Rhea" id="RHEA-COMP:10123"/>
        <dbReference type="Rhea" id="RHEA-COMP:10124"/>
        <dbReference type="ChEBI" id="CHEBI:15377"/>
        <dbReference type="ChEBI" id="CHEBI:15378"/>
        <dbReference type="ChEBI" id="CHEBI:59871"/>
        <dbReference type="ChEBI" id="CHEBI:78442"/>
        <dbReference type="ChEBI" id="CHEBI:79333"/>
        <dbReference type="EC" id="3.1.1.96"/>
    </reaction>
</comment>
<comment type="subunit">
    <text evidence="1">Homodimer.</text>
</comment>
<comment type="subcellular location">
    <subcellularLocation>
        <location evidence="1">Cytoplasm</location>
    </subcellularLocation>
</comment>
<comment type="domain">
    <text evidence="1">A Gly-cisPro motif from one monomer fits into the active site of the other monomer to allow specific chiral rejection of L-amino acids.</text>
</comment>
<comment type="similarity">
    <text evidence="1">Belongs to the DTD family.</text>
</comment>
<proteinExistence type="inferred from homology"/>
<sequence length="145" mass="15419">MRVVIQRATSAEVVVEGRTVGSLTTPGLVVLVGVTGTDTATTAEKLAEKVWGLRILSEEKSASDLNAPLLVVSQFTLYASTRKGRRPSWSAAAPGPVSEPLVDHFVTHLRSLGAHVETGIFGADMKVGLVNDGPMTILIDTDDWH</sequence>
<organism>
    <name type="scientific">Cutibacterium acnes (strain DSM 16379 / KPA171202)</name>
    <name type="common">Propionibacterium acnes</name>
    <dbReference type="NCBI Taxonomy" id="267747"/>
    <lineage>
        <taxon>Bacteria</taxon>
        <taxon>Bacillati</taxon>
        <taxon>Actinomycetota</taxon>
        <taxon>Actinomycetes</taxon>
        <taxon>Propionibacteriales</taxon>
        <taxon>Propionibacteriaceae</taxon>
        <taxon>Cutibacterium</taxon>
    </lineage>
</organism>